<accession>Q2A069</accession>
<proteinExistence type="evidence at protein level"/>
<feature type="initiator methionine" description="Removed; by host" evidence="2">
    <location>
        <position position="1"/>
    </location>
</feature>
<feature type="chain" id="PRO_0000361604" description="Pre-glycoprotein polyprotein GP complex" evidence="2">
    <location>
        <begin position="2"/>
        <end position="491"/>
    </location>
</feature>
<feature type="chain" id="PRO_0000361605" description="Stable signal peptide" evidence="2">
    <location>
        <begin position="2"/>
        <end position="58"/>
    </location>
</feature>
<feature type="chain" id="PRO_0000361606" description="Glycoprotein G1" evidence="2">
    <location>
        <begin position="59"/>
        <end position="259"/>
    </location>
</feature>
<feature type="chain" id="PRO_0000361607" description="Glycoprotein G2" evidence="2">
    <location>
        <begin position="260"/>
        <end position="491"/>
    </location>
</feature>
<feature type="topological domain" description="Extracellular" evidence="2">
    <location>
        <begin position="2"/>
        <end position="17"/>
    </location>
</feature>
<feature type="transmembrane region" description="Helical" evidence="2">
    <location>
        <begin position="18"/>
        <end position="33"/>
    </location>
</feature>
<feature type="topological domain" description="Cytoplasmic" evidence="2">
    <location>
        <begin position="34"/>
        <end position="58"/>
    </location>
</feature>
<feature type="topological domain" description="Extracellular" evidence="2">
    <location>
        <begin position="59"/>
        <end position="432"/>
    </location>
</feature>
<feature type="transmembrane region" description="Helical" evidence="2">
    <location>
        <begin position="433"/>
        <end position="453"/>
    </location>
</feature>
<feature type="topological domain" description="Cytoplasmic" evidence="2">
    <location>
        <begin position="454"/>
        <end position="491"/>
    </location>
</feature>
<feature type="binding site" evidence="2">
    <location>
        <position position="57"/>
    </location>
    <ligand>
        <name>Zn(2+)</name>
        <dbReference type="ChEBI" id="CHEBI:29105"/>
        <label>1</label>
    </ligand>
</feature>
<feature type="binding site" evidence="2">
    <location>
        <position position="455"/>
    </location>
    <ligand>
        <name>Zn(2+)</name>
        <dbReference type="ChEBI" id="CHEBI:29105"/>
        <label>2</label>
    </ligand>
</feature>
<feature type="binding site" evidence="2">
    <location>
        <position position="457"/>
    </location>
    <ligand>
        <name>Zn(2+)</name>
        <dbReference type="ChEBI" id="CHEBI:29105"/>
        <label>2</label>
    </ligand>
</feature>
<feature type="binding site" evidence="2">
    <location>
        <position position="463"/>
    </location>
    <ligand>
        <name>Zn(2+)</name>
        <dbReference type="ChEBI" id="CHEBI:29105"/>
        <label>2</label>
    </ligand>
</feature>
<feature type="binding site" evidence="2">
    <location>
        <position position="467"/>
    </location>
    <ligand>
        <name>Zn(2+)</name>
        <dbReference type="ChEBI" id="CHEBI:29105"/>
        <label>1</label>
    </ligand>
</feature>
<feature type="binding site" evidence="2">
    <location>
        <position position="475"/>
    </location>
    <ligand>
        <name>Zn(2+)</name>
        <dbReference type="ChEBI" id="CHEBI:29105"/>
        <label>1</label>
    </ligand>
</feature>
<feature type="binding site" evidence="2">
    <location>
        <position position="477"/>
    </location>
    <ligand>
        <name>Zn(2+)</name>
        <dbReference type="ChEBI" id="CHEBI:29105"/>
        <label>1</label>
    </ligand>
</feature>
<feature type="site" description="Important for GP-C-mediated membrane fusion" evidence="1">
    <location>
        <position position="33"/>
    </location>
</feature>
<feature type="site" description="Cleavage; by host signal peptidase" evidence="2">
    <location>
        <begin position="58"/>
        <end position="59"/>
    </location>
</feature>
<feature type="site" description="Cleavage; by host MBTPS1" evidence="2">
    <location>
        <begin position="259"/>
        <end position="260"/>
    </location>
</feature>
<feature type="lipid moiety-binding region" description="N-myristoyl glycine; by host" evidence="2">
    <location>
        <position position="2"/>
    </location>
</feature>
<feature type="glycosylation site" description="N-linked (GlcNAc...) asparagine; by host" evidence="2">
    <location>
        <position position="78"/>
    </location>
</feature>
<feature type="glycosylation site" description="N-linked (GlcNAc...) asparagine; by host" evidence="2">
    <location>
        <position position="88"/>
    </location>
</feature>
<feature type="glycosylation site" description="N-linked (GlcNAc...) asparagine; by host" evidence="2">
    <location>
        <position position="98"/>
    </location>
</feature>
<feature type="glycosylation site" description="N-linked (GlcNAc...) asparagine; by host" evidence="2">
    <location>
        <position position="108"/>
    </location>
</feature>
<feature type="glycosylation site" description="N-linked (GlcNAc...) asparagine; by host" evidence="2">
    <location>
        <position position="118"/>
    </location>
</feature>
<feature type="glycosylation site" description="N-linked (GlcNAc...) asparagine; by host" evidence="2">
    <location>
        <position position="166"/>
    </location>
</feature>
<feature type="glycosylation site" description="N-linked (GlcNAc...) asparagine; by host" evidence="2">
    <location>
        <position position="224"/>
    </location>
</feature>
<feature type="glycosylation site" description="N-linked (GlcNAc...) asparagine; by host" evidence="2">
    <location>
        <position position="365"/>
    </location>
</feature>
<feature type="glycosylation site" description="N-linked (GlcNAc...) asparagine; by host" evidence="2">
    <location>
        <position position="373"/>
    </location>
</feature>
<feature type="glycosylation site" description="N-linked (GlcNAc...) asparagine; by host" evidence="2">
    <location>
        <position position="390"/>
    </location>
</feature>
<feature type="glycosylation site" description="N-linked (GlcNAc...) asparagine; by host" evidence="2">
    <location>
        <position position="395"/>
    </location>
</feature>
<feature type="disulfide bond" evidence="2">
    <location>
        <begin position="85"/>
        <end position="231"/>
    </location>
</feature>
<feature type="disulfide bond" evidence="2">
    <location>
        <begin position="117"/>
        <end position="154"/>
    </location>
</feature>
<feature type="disulfide bond" evidence="2">
    <location>
        <begin position="179"/>
        <end position="212"/>
    </location>
</feature>
<feature type="disulfide bond" evidence="2">
    <location>
        <begin position="279"/>
        <end position="292"/>
    </location>
</feature>
<feature type="disulfide bond" evidence="2">
    <location>
        <begin position="301"/>
        <end position="310"/>
    </location>
</feature>
<feature type="disulfide bond" evidence="2">
    <location>
        <begin position="364"/>
        <end position="385"/>
    </location>
</feature>
<protein>
    <recommendedName>
        <fullName evidence="2">Pre-glycoprotein polyprotein GP complex</fullName>
        <shortName evidence="2">Pre-GP-C</shortName>
    </recommendedName>
    <component>
        <recommendedName>
            <fullName evidence="2">Stable signal peptide</fullName>
            <shortName evidence="2">SSP</shortName>
        </recommendedName>
    </component>
    <component>
        <recommendedName>
            <fullName evidence="2">Glycoprotein G1</fullName>
            <shortName evidence="2">GP1</shortName>
        </recommendedName>
    </component>
    <component>
        <recommendedName>
            <fullName evidence="2">Glycoprotein G2</fullName>
            <shortName evidence="2">GP2</shortName>
        </recommendedName>
    </component>
</protein>
<evidence type="ECO:0000250" key="1">
    <source>
        <dbReference type="UniProtKB" id="P26313"/>
    </source>
</evidence>
<evidence type="ECO:0000255" key="2">
    <source>
        <dbReference type="HAMAP-Rule" id="MF_04084"/>
    </source>
</evidence>
<evidence type="ECO:0000269" key="3">
    <source>
    </source>
</evidence>
<keyword id="KW-1015">Disulfide bond</keyword>
<keyword id="KW-1170">Fusion of virus membrane with host endosomal membrane</keyword>
<keyword id="KW-1168">Fusion of virus membrane with host membrane</keyword>
<keyword id="KW-0325">Glycoprotein</keyword>
<keyword id="KW-1032">Host cell membrane</keyword>
<keyword id="KW-1038">Host endoplasmic reticulum</keyword>
<keyword id="KW-1040">Host Golgi apparatus</keyword>
<keyword id="KW-1043">Host membrane</keyword>
<keyword id="KW-0945">Host-virus interaction</keyword>
<keyword id="KW-0449">Lipoprotein</keyword>
<keyword id="KW-0472">Membrane</keyword>
<keyword id="KW-0479">Metal-binding</keyword>
<keyword id="KW-0519">Myristate</keyword>
<keyword id="KW-0812">Transmembrane</keyword>
<keyword id="KW-1133">Transmembrane helix</keyword>
<keyword id="KW-1161">Viral attachment to host cell</keyword>
<keyword id="KW-0261">Viral envelope protein</keyword>
<keyword id="KW-1162">Viral penetration into host cytoplasm</keyword>
<keyword id="KW-0946">Virion</keyword>
<keyword id="KW-1164">Virus endocytosis by host</keyword>
<keyword id="KW-1160">Virus entry into host cell</keyword>
<keyword id="KW-0862">Zinc</keyword>
<name>GLYC_MOBVC</name>
<gene>
    <name evidence="2" type="primary">GPC</name>
    <name type="synonym">GP-C</name>
</gene>
<sequence>MGQIVTFFQEVPHIIEEVMNIVLITLSLLAILKGIYNVMTCGLIGLLTFLFLCGKSCSTIYKDNYRLMQLNLDMSGLNATMPLSCSKNNSHHYIQVFNTTGLELTLTNDSLIGHKWCNLSDAHKKDTYDHTLMSIISTFHLSIPNFNHYEAMACDFNGGKISIQYNLSHSSETDAMNHCGTVANGVLEVFRRMTWCTHCDTPLGASIAGFNCVRTSYKYLIIQNTTWEDHCTMSRPSPMGYLSLLSQRAREIYISRRLMGTFTWTLSDSEGNDLPGGYCLQRWMLIEAEMKCFGNTAVAKCNQQHDEEFCDMLRLFDFNKEAIHRLRVEAEKSISLINKAVNSLINDQLIMRNHLRDIMGIPYCNYSRFWYLNDTRSGRTSLPKCWMVSNGSYLNETHFSSDIEQEANNMITEMLRKEYERRQGTTPLGLVDLFVFSTSFYLISVFLHLIKIPTHRHLVGKPCPKPHRLNHMGVCSCGLYKQPGLPTKWKR</sequence>
<organism>
    <name type="scientific">Mobala mammarenavirus (isolate Rat/Central African Republic/Acar 3080/1983)</name>
    <name type="common">MOBV</name>
    <dbReference type="NCBI Taxonomy" id="3052325"/>
    <lineage>
        <taxon>Viruses</taxon>
        <taxon>Riboviria</taxon>
        <taxon>Orthornavirae</taxon>
        <taxon>Negarnaviricota</taxon>
        <taxon>Polyploviricotina</taxon>
        <taxon>Ellioviricetes</taxon>
        <taxon>Bunyavirales</taxon>
        <taxon>Arenaviridae</taxon>
        <taxon>Mammarenavirus</taxon>
    </lineage>
</organism>
<comment type="function">
    <molecule>Stable signal peptide</molecule>
    <text evidence="2">Functions as a cleaved signal peptide that is retained as the third component of the GP complex (GP-C). Helps to stabilize the spike complex in its native conformation. The SSP is required for efficient glycoprotein expression, post-translational maturation cleavage of G1 and G2, glycoprotein transport to the cell surface plasma membrane, formation of infectious virus particles, and acid pH-dependent glycoprotein-mediated cell fusion.</text>
</comment>
<comment type="function">
    <molecule>Glycoprotein G1</molecule>
    <text evidence="2 3">Forms the virion spikes together with glycoprotein G2. The glycoprotein spike trimers are connected to the underlying matrix. Mediates virus attachment to host receptor alpha-dystroglycan DAG1. This attachment induces virion internalization predominantly through clathrin- and caveolin-independent endocytosis (PubMed:11967329).</text>
</comment>
<comment type="function">
    <molecule>Glycoprotein G2</molecule>
    <text evidence="2">Forms the virion spikes together with glycoprotein G1. The glycoprotein spike trimers are connected to the underlying matrix. Class I viral fusion protein that directs fusion of viral and host endosomal membranes, leading to delivery of the nucleocapsid into the cytoplasm. Membrane fusion is mediated by irreversible conformational changes induced by acidification.</text>
</comment>
<comment type="subunit">
    <molecule>Stable signal peptide</molecule>
    <text evidence="2">Interacts with glycoprotein G2. Part of the GP complex (GP-C) together with glycoprotein G1 and glycoprotein G2. The GP-complex interacts with protein Z, which interacts with ribonucleocapsid; these interactions may induce virion budding.</text>
</comment>
<comment type="subunit">
    <molecule>Glycoprotein G1</molecule>
    <text evidence="2">Homotrimer; disulfide-linked. In pre-fusion state, G1 homotrimers bind G2 homotrimers via ionic interactions. Part of the GP complex (GP-C) together with glycoprotein G2 and the stable signal peptide. The GP-complex interacts with protein Z, which interacts with ribonucleocapsid; these interactions may induce virion budding.</text>
</comment>
<comment type="subunit">
    <molecule>Glycoprotein G2</molecule>
    <text evidence="2">Homotrimer. Interacts with the stable signal peptide. In pre-fusion state, G2 homotrimers bind G1 homotrimers via ionic interactions. Part of the GP complex (GP-C) together with glycoprotein G1 and the stable signal peptide. Acidification in the endosome triggers rearrangements, which ultimately leads to a 6 helix bundle formed by the two heptad repeat domains (HR1 and HR2) in post-fusion state. The GP-complex interacts with protein Z, which interacts with ribonucleocapsid; these interactions may induce virion budding.</text>
</comment>
<comment type="subcellular location">
    <molecule>Stable signal peptide</molecule>
    <subcellularLocation>
        <location evidence="2">Virion membrane</location>
        <topology evidence="2">Single-pass type II membrane protein</topology>
    </subcellularLocation>
    <subcellularLocation>
        <location evidence="2">Host endoplasmic reticulum membrane</location>
        <topology evidence="2">Single-pass type II membrane protein</topology>
    </subcellularLocation>
    <subcellularLocation>
        <location evidence="2">Host Golgi apparatus membrane</location>
        <topology evidence="2">Single-pass type II membrane protein</topology>
    </subcellularLocation>
    <subcellularLocation>
        <location evidence="2">Host cell membrane</location>
        <topology evidence="2">Single-pass type II membrane protein</topology>
    </subcellularLocation>
</comment>
<comment type="subcellular location">
    <molecule>Glycoprotein G1</molecule>
    <subcellularLocation>
        <location evidence="2">Virion membrane</location>
        <topology evidence="2">Peripheral membrane protein</topology>
    </subcellularLocation>
    <subcellularLocation>
        <location evidence="2">Host endoplasmic reticulum membrane</location>
        <topology evidence="2">Peripheral membrane protein</topology>
    </subcellularLocation>
    <subcellularLocation>
        <location evidence="2">Host Golgi apparatus membrane</location>
        <topology evidence="2">Peripheral membrane protein</topology>
    </subcellularLocation>
    <subcellularLocation>
        <location evidence="2">Host cell membrane</location>
        <topology evidence="2">Peripheral membrane protein</topology>
    </subcellularLocation>
</comment>
<comment type="subcellular location">
    <molecule>Glycoprotein G2</molecule>
    <subcellularLocation>
        <location evidence="2">Virion membrane</location>
        <topology evidence="2">Single-pass membrane protein</topology>
    </subcellularLocation>
    <subcellularLocation>
        <location evidence="2">Host endoplasmic reticulum membrane</location>
        <topology evidence="2">Single-pass membrane protein</topology>
    </subcellularLocation>
    <subcellularLocation>
        <location evidence="2">Host Golgi apparatus membrane</location>
        <topology evidence="2">Single-pass membrane protein</topology>
    </subcellularLocation>
    <subcellularLocation>
        <location evidence="2">Host cell membrane</location>
        <topology evidence="2">Single-pass membrane protein</topology>
    </subcellularLocation>
    <text evidence="2">Binding to the stable signal peptide masks endogenous ER localization signals in the cytoplasmic domain of G2 to ensure that only the fully assembled, tripartite GP complex is transported for virion assembly.</text>
</comment>
<comment type="domain">
    <molecule>Stable signal peptide</molecule>
    <text evidence="2">The N-terminus is localized at the extracellular side of the GP-C, with a part embedded in the membrane probably.</text>
</comment>
<comment type="domain">
    <molecule>Glycoprotein G2</molecule>
    <text evidence="2">Contains 1 fusion peptide at the N-terminus, 2 heptad repeats domains HR1 and HR2 and, at the C-terminus, a cytoplasmic domain that plays a role in ER location. Also contains a zinc-binding domain that allows SSP retention in the GPC complex by accepting a cysteine from SSP as the fourth ligand.</text>
</comment>
<comment type="PTM">
    <molecule>Pre-glycoprotein polyprotein GP complex</molecule>
    <text evidence="2">Specific enzymatic cleavages in vivo yield mature proteins. GP-C polyprotein is cleaved in the endoplasmic reticulum by the host protease MBTPS1. Only cleaved glycoprotein is incorporated into virions.</text>
</comment>
<comment type="PTM">
    <molecule>Stable signal peptide</molecule>
    <text evidence="2">The SSP remains stably associated with the GP complex following cleavage by signal peptidase and plays crucial roles in the trafficking of GP through the secretory pathway.</text>
</comment>
<comment type="PTM">
    <molecule>Stable signal peptide</molecule>
    <text evidence="2">Myristoylation is necessary for GP2-mediated fusion activity.</text>
</comment>
<comment type="similarity">
    <text evidence="2">Belongs to the arenaviridae GPC protein family.</text>
</comment>
<reference key="1">
    <citation type="journal article" date="2006" name="Virology">
        <title>Phylogeny and evolution of old world arenaviruses.</title>
        <authorList>
            <person name="Emonet S."/>
            <person name="Lemasson J.J."/>
            <person name="Gonzalez J.P."/>
            <person name="de Lamballerie X."/>
            <person name="Charrel R.N."/>
        </authorList>
    </citation>
    <scope>NUCLEOTIDE SEQUENCE [GENOMIC RNA]</scope>
</reference>
<reference key="2">
    <citation type="journal article" date="2008" name="Curr. Opin. Microbiol.">
        <title>Phylogeny of the genus Arenavirus.</title>
        <authorList>
            <person name="Charrel R.N."/>
            <person name="de Lamballerie X."/>
            <person name="Emonet S."/>
        </authorList>
    </citation>
    <scope>NUCLEOTIDE SEQUENCE [GENOMIC RNA]</scope>
</reference>
<reference key="3">
    <citation type="journal article" date="2002" name="J. Virol.">
        <title>New World arenavirus clade C, but not clade A and B viruses, utilizes alpha-dystroglycan as its major receptor.</title>
        <authorList>
            <person name="Spiropoulou C.F."/>
            <person name="Kunz S."/>
            <person name="Rollin P.E."/>
            <person name="Campbell K.P."/>
            <person name="Oldstone M.B."/>
        </authorList>
    </citation>
    <scope>FUNCTION</scope>
    <scope>INTERACTION WITH HOST DAG1</scope>
</reference>
<organismHost>
    <name type="scientific">Praomys</name>
    <name type="common">African soft-furred rats</name>
    <dbReference type="NCBI Taxonomy" id="10111"/>
</organismHost>
<dbReference type="EMBL" id="AY342390">
    <property type="protein sequence ID" value="AAQ75069.1"/>
    <property type="molecule type" value="Genomic_RNA"/>
</dbReference>
<dbReference type="RefSeq" id="YP_516226.1">
    <property type="nucleotide sequence ID" value="NC_007903.1"/>
</dbReference>
<dbReference type="SMR" id="Q2A069"/>
<dbReference type="GlyCosmos" id="Q2A069">
    <property type="glycosylation" value="11 sites, No reported glycans"/>
</dbReference>
<dbReference type="KEGG" id="vg:5075845"/>
<dbReference type="OrthoDB" id="4838at10239"/>
<dbReference type="Proteomes" id="UP000140987">
    <property type="component" value="Genome"/>
</dbReference>
<dbReference type="GO" id="GO:0044167">
    <property type="term" value="C:host cell endoplasmic reticulum membrane"/>
    <property type="evidence" value="ECO:0007669"/>
    <property type="project" value="UniProtKB-SubCell"/>
</dbReference>
<dbReference type="GO" id="GO:0044178">
    <property type="term" value="C:host cell Golgi membrane"/>
    <property type="evidence" value="ECO:0007669"/>
    <property type="project" value="UniProtKB-SubCell"/>
</dbReference>
<dbReference type="GO" id="GO:0020002">
    <property type="term" value="C:host cell plasma membrane"/>
    <property type="evidence" value="ECO:0007669"/>
    <property type="project" value="UniProtKB-SubCell"/>
</dbReference>
<dbReference type="GO" id="GO:0016020">
    <property type="term" value="C:membrane"/>
    <property type="evidence" value="ECO:0007669"/>
    <property type="project" value="UniProtKB-UniRule"/>
</dbReference>
<dbReference type="GO" id="GO:0019031">
    <property type="term" value="C:viral envelope"/>
    <property type="evidence" value="ECO:0007669"/>
    <property type="project" value="UniProtKB-UniRule"/>
</dbReference>
<dbReference type="GO" id="GO:0055036">
    <property type="term" value="C:virion membrane"/>
    <property type="evidence" value="ECO:0007669"/>
    <property type="project" value="UniProtKB-SubCell"/>
</dbReference>
<dbReference type="GO" id="GO:0046872">
    <property type="term" value="F:metal ion binding"/>
    <property type="evidence" value="ECO:0007669"/>
    <property type="project" value="UniProtKB-KW"/>
</dbReference>
<dbReference type="GO" id="GO:0039654">
    <property type="term" value="P:fusion of virus membrane with host endosome membrane"/>
    <property type="evidence" value="ECO:0007669"/>
    <property type="project" value="UniProtKB-UniRule"/>
</dbReference>
<dbReference type="GO" id="GO:0019065">
    <property type="term" value="P:receptor-mediated endocytosis of virus by host cell"/>
    <property type="evidence" value="ECO:0007669"/>
    <property type="project" value="UniProtKB-UniRule"/>
</dbReference>
<dbReference type="GO" id="GO:0019062">
    <property type="term" value="P:virion attachment to host cell"/>
    <property type="evidence" value="ECO:0007669"/>
    <property type="project" value="UniProtKB-UniRule"/>
</dbReference>
<dbReference type="Gene3D" id="6.10.140.1590">
    <property type="match status" value="1"/>
</dbReference>
<dbReference type="Gene3D" id="2.20.28.180">
    <property type="entry name" value="Arenavirus glycoprotein, zinc binding domain"/>
    <property type="match status" value="1"/>
</dbReference>
<dbReference type="HAMAP" id="MF_04084">
    <property type="entry name" value="ARENA_GPC"/>
    <property type="match status" value="1"/>
</dbReference>
<dbReference type="InterPro" id="IPR001535">
    <property type="entry name" value="Arena_glycoprot"/>
</dbReference>
<dbReference type="InterPro" id="IPR043015">
    <property type="entry name" value="Arena_glycoprot_zinc-bd"/>
</dbReference>
<dbReference type="Pfam" id="PF00798">
    <property type="entry name" value="Arena_glycoprot"/>
    <property type="match status" value="1"/>
</dbReference>
<dbReference type="PIRSF" id="PIRSF004028">
    <property type="entry name" value="GPC_ArenaV"/>
    <property type="match status" value="1"/>
</dbReference>